<sequence>MATKEFYFAIIGHCDQPIFEMDFPVGEKKTKESEGTRHLNHYIGHAALDIVDEHALTTSQMYLKMVDKFNEWYVSAFVTASRIRFIMLHTHRADEGIKQFFQEMYETYIKHAMNPFYEIDDVIESPAFEQKATLYGRKYLS</sequence>
<feature type="chain" id="PRO_0000412461" description="Probable trafficking protein particle complex subunit 2">
    <location>
        <begin position="1"/>
        <end position="141"/>
    </location>
</feature>
<evidence type="ECO:0000250" key="1"/>
<evidence type="ECO:0000269" key="2">
    <source>
    </source>
</evidence>
<evidence type="ECO:0000305" key="3"/>
<organism>
    <name type="scientific">Caenorhabditis elegans</name>
    <dbReference type="NCBI Taxonomy" id="6239"/>
    <lineage>
        <taxon>Eukaryota</taxon>
        <taxon>Metazoa</taxon>
        <taxon>Ecdysozoa</taxon>
        <taxon>Nematoda</taxon>
        <taxon>Chromadorea</taxon>
        <taxon>Rhabditida</taxon>
        <taxon>Rhabditina</taxon>
        <taxon>Rhabditomorpha</taxon>
        <taxon>Rhabditoidea</taxon>
        <taxon>Rhabditidae</taxon>
        <taxon>Peloderinae</taxon>
        <taxon>Caenorhabditis</taxon>
    </lineage>
</organism>
<keyword id="KW-0963">Cytoplasm</keyword>
<keyword id="KW-0256">Endoplasmic reticulum</keyword>
<keyword id="KW-0931">ER-Golgi transport</keyword>
<keyword id="KW-0333">Golgi apparatus</keyword>
<keyword id="KW-1185">Reference proteome</keyword>
<keyword id="KW-0813">Transport</keyword>
<gene>
    <name type="primary">sedl-1</name>
    <name type="ORF">W05H7.3</name>
</gene>
<reference key="1">
    <citation type="journal article" date="1998" name="Science">
        <title>Genome sequence of the nematode C. elegans: a platform for investigating biology.</title>
        <authorList>
            <consortium name="The C. elegans sequencing consortium"/>
        </authorList>
    </citation>
    <scope>NUCLEOTIDE SEQUENCE [LARGE SCALE GENOMIC DNA]</scope>
    <source>
        <strain>Bristol N2</strain>
    </source>
</reference>
<reference key="2">
    <citation type="journal article" date="2006" name="Nat. Cell Biol.">
        <title>The endocytic pathway mediates cell entry of dsRNA to induce RNAi silencing.</title>
        <authorList>
            <person name="Saleh M.-C."/>
            <person name="van Rij R.P."/>
            <person name="Hekele A."/>
            <person name="Gillis A."/>
            <person name="Foley E."/>
            <person name="O'Farrell P.H."/>
            <person name="Andino R."/>
        </authorList>
    </citation>
    <scope>FUNCTION</scope>
</reference>
<protein>
    <recommendedName>
        <fullName>Probable trafficking protein particle complex subunit 2</fullName>
    </recommendedName>
</protein>
<accession>O02173</accession>
<dbReference type="EMBL" id="FO080991">
    <property type="protein sequence ID" value="CCD68293.1"/>
    <property type="molecule type" value="Genomic_DNA"/>
</dbReference>
<dbReference type="PIR" id="T29507">
    <property type="entry name" value="T29507"/>
</dbReference>
<dbReference type="RefSeq" id="NP_508272.1">
    <property type="nucleotide sequence ID" value="NM_075871.7"/>
</dbReference>
<dbReference type="SMR" id="O02173"/>
<dbReference type="BioGRID" id="45430">
    <property type="interactions" value="1"/>
</dbReference>
<dbReference type="FunCoup" id="O02173">
    <property type="interactions" value="2001"/>
</dbReference>
<dbReference type="IntAct" id="O02173">
    <property type="interactions" value="2"/>
</dbReference>
<dbReference type="STRING" id="6239.W05H7.3.1"/>
<dbReference type="PaxDb" id="6239-W05H7.3"/>
<dbReference type="PeptideAtlas" id="O02173"/>
<dbReference type="EnsemblMetazoa" id="W05H7.3.1">
    <property type="protein sequence ID" value="W05H7.3.1"/>
    <property type="gene ID" value="WBGene00021046"/>
</dbReference>
<dbReference type="GeneID" id="180478"/>
<dbReference type="KEGG" id="cel:CELE_W05H7.3"/>
<dbReference type="UCSC" id="W05H7.3">
    <property type="organism name" value="c. elegans"/>
</dbReference>
<dbReference type="AGR" id="WB:WBGene00021046"/>
<dbReference type="CTD" id="180478"/>
<dbReference type="WormBase" id="W05H7.3">
    <property type="protein sequence ID" value="CE14652"/>
    <property type="gene ID" value="WBGene00021046"/>
    <property type="gene designation" value="sedl-1"/>
</dbReference>
<dbReference type="eggNOG" id="KOG3487">
    <property type="taxonomic scope" value="Eukaryota"/>
</dbReference>
<dbReference type="GeneTree" id="ENSGT00940000164277"/>
<dbReference type="HOGENOM" id="CLU_085828_0_2_1"/>
<dbReference type="InParanoid" id="O02173"/>
<dbReference type="OMA" id="RYMNQFI"/>
<dbReference type="OrthoDB" id="10252102at2759"/>
<dbReference type="PhylomeDB" id="O02173"/>
<dbReference type="Reactome" id="R-CEL-204005">
    <property type="pathway name" value="COPII-mediated vesicle transport"/>
</dbReference>
<dbReference type="Reactome" id="R-CEL-8876198">
    <property type="pathway name" value="RAB GEFs exchange GTP for GDP on RABs"/>
</dbReference>
<dbReference type="PRO" id="PR:O02173"/>
<dbReference type="Proteomes" id="UP000001940">
    <property type="component" value="Chromosome X"/>
</dbReference>
<dbReference type="Bgee" id="WBGene00021046">
    <property type="expression patterns" value="Expressed in pharyngeal muscle cell (C elegans) and 3 other cell types or tissues"/>
</dbReference>
<dbReference type="GO" id="GO:0005737">
    <property type="term" value="C:cytoplasm"/>
    <property type="evidence" value="ECO:0000318"/>
    <property type="project" value="GO_Central"/>
</dbReference>
<dbReference type="GO" id="GO:0005783">
    <property type="term" value="C:endoplasmic reticulum"/>
    <property type="evidence" value="ECO:0007669"/>
    <property type="project" value="UniProtKB-SubCell"/>
</dbReference>
<dbReference type="GO" id="GO:0005794">
    <property type="term" value="C:Golgi apparatus"/>
    <property type="evidence" value="ECO:0007669"/>
    <property type="project" value="UniProtKB-SubCell"/>
</dbReference>
<dbReference type="GO" id="GO:0005634">
    <property type="term" value="C:nucleus"/>
    <property type="evidence" value="ECO:0000318"/>
    <property type="project" value="GO_Central"/>
</dbReference>
<dbReference type="GO" id="GO:0048471">
    <property type="term" value="C:perinuclear region of cytoplasm"/>
    <property type="evidence" value="ECO:0007669"/>
    <property type="project" value="UniProtKB-SubCell"/>
</dbReference>
<dbReference type="GO" id="GO:0030008">
    <property type="term" value="C:TRAPP complex"/>
    <property type="evidence" value="ECO:0000318"/>
    <property type="project" value="GO_Central"/>
</dbReference>
<dbReference type="GO" id="GO:0006888">
    <property type="term" value="P:endoplasmic reticulum to Golgi vesicle-mediated transport"/>
    <property type="evidence" value="ECO:0000318"/>
    <property type="project" value="GO_Central"/>
</dbReference>
<dbReference type="CDD" id="cd14825">
    <property type="entry name" value="TRAPPC2_sedlin"/>
    <property type="match status" value="1"/>
</dbReference>
<dbReference type="Gene3D" id="3.30.450.70">
    <property type="match status" value="1"/>
</dbReference>
<dbReference type="InterPro" id="IPR011012">
    <property type="entry name" value="Longin-like_dom_sf"/>
</dbReference>
<dbReference type="InterPro" id="IPR006722">
    <property type="entry name" value="Sedlin"/>
</dbReference>
<dbReference type="PANTHER" id="PTHR12403">
    <property type="entry name" value="TRAFFICKING PROTEIN PARTICLE COMPLEX SUBUNIT 2"/>
    <property type="match status" value="1"/>
</dbReference>
<dbReference type="Pfam" id="PF04628">
    <property type="entry name" value="Sedlin_N"/>
    <property type="match status" value="1"/>
</dbReference>
<dbReference type="SUPFAM" id="SSF64356">
    <property type="entry name" value="SNARE-like"/>
    <property type="match status" value="1"/>
</dbReference>
<proteinExistence type="evidence at protein level"/>
<name>TPPC2_CAEEL</name>
<comment type="function">
    <text evidence="2">May play a role in vesicular transport from endoplasmic reticulum to Golgi. Required for the systemic spread of the RNAi response.</text>
</comment>
<comment type="subunit">
    <text evidence="1">Part of the multisubunit TRAPP (transport protein particle) complex.</text>
</comment>
<comment type="interaction">
    <interactant intactId="EBI-367809">
        <id>O02173</id>
    </interactant>
    <interactant intactId="EBI-367817">
        <id>Q9NA81</id>
        <label>trpp-5</label>
    </interactant>
    <organismsDiffer>false</organismsDiffer>
    <experiments>3</experiments>
</comment>
<comment type="subcellular location">
    <subcellularLocation>
        <location evidence="1">Cytoplasm</location>
        <location evidence="1">Perinuclear region</location>
    </subcellularLocation>
    <subcellularLocation>
        <location evidence="1">Endoplasmic reticulum</location>
    </subcellularLocation>
    <subcellularLocation>
        <location evidence="1">Golgi apparatus</location>
    </subcellularLocation>
</comment>
<comment type="similarity">
    <text evidence="3">Belongs to the TRAPP small subunits family. Sedlin subfamily.</text>
</comment>